<comment type="function">
    <text evidence="1">Involved in tryptophan transport across the cytoplasmic membrane. Plays a role in transporting tryptophan which is to be used catabolically (By similarity).</text>
</comment>
<comment type="subcellular location">
    <subcellularLocation>
        <location evidence="1">Cell inner membrane</location>
        <topology evidence="1">Multi-pass membrane protein</topology>
    </subcellularLocation>
</comment>
<comment type="similarity">
    <text evidence="3">Belongs to the amino acid/polyamine transporter 2 family. Mtr/TnaB/TyrP permease subfamily.</text>
</comment>
<organism>
    <name type="scientific">Escherichia coli O157:H7</name>
    <dbReference type="NCBI Taxonomy" id="83334"/>
    <lineage>
        <taxon>Bacteria</taxon>
        <taxon>Pseudomonadati</taxon>
        <taxon>Pseudomonadota</taxon>
        <taxon>Gammaproteobacteria</taxon>
        <taxon>Enterobacterales</taxon>
        <taxon>Enterobacteriaceae</taxon>
        <taxon>Escherichia</taxon>
    </lineage>
</organism>
<protein>
    <recommendedName>
        <fullName>Low affinity tryptophan permease</fullName>
    </recommendedName>
</protein>
<accession>Q8XB33</accession>
<feature type="chain" id="PRO_0000093801" description="Low affinity tryptophan permease">
    <location>
        <begin position="1"/>
        <end position="415"/>
    </location>
</feature>
<feature type="topological domain" description="Cytoplasmic" evidence="2">
    <location>
        <begin position="1"/>
        <end position="11"/>
    </location>
</feature>
<feature type="transmembrane region" description="Helical" evidence="2">
    <location>
        <begin position="12"/>
        <end position="32"/>
    </location>
</feature>
<feature type="topological domain" description="Periplasmic" evidence="2">
    <location>
        <position position="33"/>
    </location>
</feature>
<feature type="transmembrane region" description="Helical" evidence="2">
    <location>
        <begin position="34"/>
        <end position="54"/>
    </location>
</feature>
<feature type="topological domain" description="Cytoplasmic" evidence="2">
    <location>
        <begin position="55"/>
        <end position="86"/>
    </location>
</feature>
<feature type="transmembrane region" description="Helical" evidence="2">
    <location>
        <begin position="87"/>
        <end position="107"/>
    </location>
</feature>
<feature type="topological domain" description="Periplasmic" evidence="2">
    <location>
        <begin position="108"/>
        <end position="127"/>
    </location>
</feature>
<feature type="transmembrane region" description="Helical" evidence="2">
    <location>
        <begin position="128"/>
        <end position="148"/>
    </location>
</feature>
<feature type="topological domain" description="Cytoplasmic" evidence="2">
    <location>
        <begin position="149"/>
        <end position="153"/>
    </location>
</feature>
<feature type="transmembrane region" description="Helical" evidence="2">
    <location>
        <begin position="154"/>
        <end position="174"/>
    </location>
</feature>
<feature type="topological domain" description="Periplasmic" evidence="2">
    <location>
        <begin position="175"/>
        <end position="191"/>
    </location>
</feature>
<feature type="transmembrane region" description="Helical" evidence="2">
    <location>
        <begin position="192"/>
        <end position="212"/>
    </location>
</feature>
<feature type="topological domain" description="Cytoplasmic" evidence="2">
    <location>
        <begin position="213"/>
        <end position="229"/>
    </location>
</feature>
<feature type="transmembrane region" description="Helical" evidence="2">
    <location>
        <begin position="230"/>
        <end position="250"/>
    </location>
</feature>
<feature type="topological domain" description="Periplasmic" evidence="2">
    <location>
        <begin position="251"/>
        <end position="286"/>
    </location>
</feature>
<feature type="transmembrane region" description="Helical" evidence="2">
    <location>
        <begin position="287"/>
        <end position="307"/>
    </location>
</feature>
<feature type="topological domain" description="Cytoplasmic" evidence="2">
    <location>
        <begin position="308"/>
        <end position="326"/>
    </location>
</feature>
<feature type="transmembrane region" description="Helical" evidence="2">
    <location>
        <begin position="327"/>
        <end position="347"/>
    </location>
</feature>
<feature type="topological domain" description="Periplasmic" evidence="2">
    <location>
        <position position="348"/>
    </location>
</feature>
<feature type="transmembrane region" description="Helical" evidence="2">
    <location>
        <begin position="349"/>
        <end position="369"/>
    </location>
</feature>
<feature type="topological domain" description="Cytoplasmic" evidence="2">
    <location>
        <begin position="370"/>
        <end position="387"/>
    </location>
</feature>
<feature type="transmembrane region" description="Helical" evidence="2">
    <location>
        <begin position="388"/>
        <end position="408"/>
    </location>
</feature>
<feature type="topological domain" description="Periplasmic" evidence="2">
    <location>
        <begin position="409"/>
        <end position="415"/>
    </location>
</feature>
<sequence length="415" mass="45196">MTDQAEKKHSAFWGVMVIAGTVIGGGMFALPVDLAGAWFFWGAFILIIAWFSMLHSGLLLLEANLNYPVGSSFNTITKDLIGNTWNIISGITVAFVLYILTYAYISANGAIISETISMNLGYHANPRIVGICTAIFVASVLWISSLAASRITSLFLGLKIISFVIVFGSFFFLVDYSILRDATSSTAGTSYFPYIFMALPVCLASFGFHGNIPSLIICYGKRKDKLIKSVVFGSLLALVIYLFWLYCTMGNIPRESFKAIISSGGNVDSLVKSFLGTKQHGIIEFCLLVFSNLAVASSFFGVTLGLFDYLADLFKIDNSHGGRFKTVLLTFLPPALLYLIFPNGFIYGIGGAGLCATIWAVIIPAVLAIKARKKFPNQMFTVWGGNLIPAIVILFGITVILCWFGNVFNVLPKFG</sequence>
<proteinExistence type="inferred from homology"/>
<dbReference type="EMBL" id="AE005174">
    <property type="protein sequence ID" value="AAG58909.1"/>
    <property type="molecule type" value="Genomic_DNA"/>
</dbReference>
<dbReference type="EMBL" id="BA000007">
    <property type="protein sequence ID" value="BAB38069.1"/>
    <property type="molecule type" value="Genomic_DNA"/>
</dbReference>
<dbReference type="PIR" id="A86056">
    <property type="entry name" value="A86056"/>
</dbReference>
<dbReference type="PIR" id="F91209">
    <property type="entry name" value="F91209"/>
</dbReference>
<dbReference type="RefSeq" id="NP_312673.1">
    <property type="nucleotide sequence ID" value="NC_002695.1"/>
</dbReference>
<dbReference type="RefSeq" id="WP_000131901.1">
    <property type="nucleotide sequence ID" value="NZ_VOAI01000011.1"/>
</dbReference>
<dbReference type="SMR" id="Q8XB33"/>
<dbReference type="STRING" id="155864.Z5204"/>
<dbReference type="GeneID" id="915392"/>
<dbReference type="KEGG" id="ece:Z5204"/>
<dbReference type="KEGG" id="ecs:ECs_4646"/>
<dbReference type="PATRIC" id="fig|386585.9.peg.4855"/>
<dbReference type="eggNOG" id="COG0814">
    <property type="taxonomic scope" value="Bacteria"/>
</dbReference>
<dbReference type="HOGENOM" id="CLU_038102_2_1_6"/>
<dbReference type="OMA" id="FAYVSHM"/>
<dbReference type="Proteomes" id="UP000000558">
    <property type="component" value="Chromosome"/>
</dbReference>
<dbReference type="Proteomes" id="UP000002519">
    <property type="component" value="Chromosome"/>
</dbReference>
<dbReference type="GO" id="GO:0005886">
    <property type="term" value="C:plasma membrane"/>
    <property type="evidence" value="ECO:0007669"/>
    <property type="project" value="UniProtKB-SubCell"/>
</dbReference>
<dbReference type="GO" id="GO:0015173">
    <property type="term" value="F:aromatic amino acid transmembrane transporter activity"/>
    <property type="evidence" value="ECO:0007669"/>
    <property type="project" value="InterPro"/>
</dbReference>
<dbReference type="GO" id="GO:0003333">
    <property type="term" value="P:amino acid transmembrane transport"/>
    <property type="evidence" value="ECO:0007669"/>
    <property type="project" value="InterPro"/>
</dbReference>
<dbReference type="GO" id="GO:0006569">
    <property type="term" value="P:L-tryptophan catabolic process"/>
    <property type="evidence" value="ECO:0007669"/>
    <property type="project" value="UniProtKB-KW"/>
</dbReference>
<dbReference type="FunFam" id="1.20.1740.10:FF:000019">
    <property type="entry name" value="Tryptophan permease TnaB"/>
    <property type="match status" value="1"/>
</dbReference>
<dbReference type="Gene3D" id="1.20.1740.10">
    <property type="entry name" value="Amino acid/polyamine transporter I"/>
    <property type="match status" value="1"/>
</dbReference>
<dbReference type="InterPro" id="IPR018227">
    <property type="entry name" value="Amino_acid_transport_2"/>
</dbReference>
<dbReference type="InterPro" id="IPR013061">
    <property type="entry name" value="Trp/try_permease_CS"/>
</dbReference>
<dbReference type="InterPro" id="IPR013059">
    <property type="entry name" value="Trp_tyr_transpt"/>
</dbReference>
<dbReference type="NCBIfam" id="TIGR00837">
    <property type="entry name" value="araaP"/>
    <property type="match status" value="1"/>
</dbReference>
<dbReference type="NCBIfam" id="NF007235">
    <property type="entry name" value="PRK09664.1"/>
    <property type="match status" value="1"/>
</dbReference>
<dbReference type="PANTHER" id="PTHR46997">
    <property type="entry name" value="LOW AFFINITY TRYPTOPHAN PERMEASE-RELATED"/>
    <property type="match status" value="1"/>
</dbReference>
<dbReference type="PANTHER" id="PTHR46997:SF1">
    <property type="entry name" value="LOW AFFINITY TRYPTOPHAN PERMEASE-RELATED"/>
    <property type="match status" value="1"/>
</dbReference>
<dbReference type="Pfam" id="PF03222">
    <property type="entry name" value="Trp_Tyr_perm"/>
    <property type="match status" value="1"/>
</dbReference>
<dbReference type="PRINTS" id="PR00166">
    <property type="entry name" value="AROAAPRMEASE"/>
</dbReference>
<dbReference type="PROSITE" id="PS00594">
    <property type="entry name" value="AROMATIC_AA_PERMEASE_1"/>
    <property type="match status" value="1"/>
</dbReference>
<reference key="1">
    <citation type="journal article" date="2001" name="Nature">
        <title>Genome sequence of enterohaemorrhagic Escherichia coli O157:H7.</title>
        <authorList>
            <person name="Perna N.T."/>
            <person name="Plunkett G. III"/>
            <person name="Burland V."/>
            <person name="Mau B."/>
            <person name="Glasner J.D."/>
            <person name="Rose D.J."/>
            <person name="Mayhew G.F."/>
            <person name="Evans P.S."/>
            <person name="Gregor J."/>
            <person name="Kirkpatrick H.A."/>
            <person name="Posfai G."/>
            <person name="Hackett J."/>
            <person name="Klink S."/>
            <person name="Boutin A."/>
            <person name="Shao Y."/>
            <person name="Miller L."/>
            <person name="Grotbeck E.J."/>
            <person name="Davis N.W."/>
            <person name="Lim A."/>
            <person name="Dimalanta E.T."/>
            <person name="Potamousis K."/>
            <person name="Apodaca J."/>
            <person name="Anantharaman T.S."/>
            <person name="Lin J."/>
            <person name="Yen G."/>
            <person name="Schwartz D.C."/>
            <person name="Welch R.A."/>
            <person name="Blattner F.R."/>
        </authorList>
    </citation>
    <scope>NUCLEOTIDE SEQUENCE [LARGE SCALE GENOMIC DNA]</scope>
    <source>
        <strain>O157:H7 / EDL933 / ATCC 700927 / EHEC</strain>
    </source>
</reference>
<reference key="2">
    <citation type="journal article" date="2001" name="DNA Res.">
        <title>Complete genome sequence of enterohemorrhagic Escherichia coli O157:H7 and genomic comparison with a laboratory strain K-12.</title>
        <authorList>
            <person name="Hayashi T."/>
            <person name="Makino K."/>
            <person name="Ohnishi M."/>
            <person name="Kurokawa K."/>
            <person name="Ishii K."/>
            <person name="Yokoyama K."/>
            <person name="Han C.-G."/>
            <person name="Ohtsubo E."/>
            <person name="Nakayama K."/>
            <person name="Murata T."/>
            <person name="Tanaka M."/>
            <person name="Tobe T."/>
            <person name="Iida T."/>
            <person name="Takami H."/>
            <person name="Honda T."/>
            <person name="Sasakawa C."/>
            <person name="Ogasawara N."/>
            <person name="Yasunaga T."/>
            <person name="Kuhara S."/>
            <person name="Shiba T."/>
            <person name="Hattori M."/>
            <person name="Shinagawa H."/>
        </authorList>
    </citation>
    <scope>NUCLEOTIDE SEQUENCE [LARGE SCALE GENOMIC DNA]</scope>
    <source>
        <strain>O157:H7 / Sakai / RIMD 0509952 / EHEC</strain>
    </source>
</reference>
<gene>
    <name type="primary">tnaB</name>
    <name type="ordered locus">Z5204</name>
    <name type="ordered locus">ECs4646</name>
</gene>
<name>TNAB_ECO57</name>
<keyword id="KW-0029">Amino-acid transport</keyword>
<keyword id="KW-0997">Cell inner membrane</keyword>
<keyword id="KW-1003">Cell membrane</keyword>
<keyword id="KW-0472">Membrane</keyword>
<keyword id="KW-1185">Reference proteome</keyword>
<keyword id="KW-0812">Transmembrane</keyword>
<keyword id="KW-1133">Transmembrane helix</keyword>
<keyword id="KW-0813">Transport</keyword>
<keyword id="KW-0823">Tryptophan catabolism</keyword>
<evidence type="ECO:0000250" key="1"/>
<evidence type="ECO:0000255" key="2"/>
<evidence type="ECO:0000305" key="3"/>